<organism>
    <name type="scientific">Homo sapiens</name>
    <name type="common">Human</name>
    <dbReference type="NCBI Taxonomy" id="9606"/>
    <lineage>
        <taxon>Eukaryota</taxon>
        <taxon>Metazoa</taxon>
        <taxon>Chordata</taxon>
        <taxon>Craniata</taxon>
        <taxon>Vertebrata</taxon>
        <taxon>Euteleostomi</taxon>
        <taxon>Mammalia</taxon>
        <taxon>Eutheria</taxon>
        <taxon>Euarchontoglires</taxon>
        <taxon>Primates</taxon>
        <taxon>Haplorrhini</taxon>
        <taxon>Catarrhini</taxon>
        <taxon>Hominidae</taxon>
        <taxon>Homo</taxon>
    </lineage>
</organism>
<reference key="1">
    <citation type="journal article" date="2003" name="Nature">
        <title>The DNA sequence of human chromosome 7.</title>
        <authorList>
            <person name="Hillier L.W."/>
            <person name="Fulton R.S."/>
            <person name="Fulton L.A."/>
            <person name="Graves T.A."/>
            <person name="Pepin K.H."/>
            <person name="Wagner-McPherson C."/>
            <person name="Layman D."/>
            <person name="Maas J."/>
            <person name="Jaeger S."/>
            <person name="Walker R."/>
            <person name="Wylie K."/>
            <person name="Sekhon M."/>
            <person name="Becker M.C."/>
            <person name="O'Laughlin M.D."/>
            <person name="Schaller M.E."/>
            <person name="Fewell G.A."/>
            <person name="Delehaunty K.D."/>
            <person name="Miner T.L."/>
            <person name="Nash W.E."/>
            <person name="Cordes M."/>
            <person name="Du H."/>
            <person name="Sun H."/>
            <person name="Edwards J."/>
            <person name="Bradshaw-Cordum H."/>
            <person name="Ali J."/>
            <person name="Andrews S."/>
            <person name="Isak A."/>
            <person name="Vanbrunt A."/>
            <person name="Nguyen C."/>
            <person name="Du F."/>
            <person name="Lamar B."/>
            <person name="Courtney L."/>
            <person name="Kalicki J."/>
            <person name="Ozersky P."/>
            <person name="Bielicki L."/>
            <person name="Scott K."/>
            <person name="Holmes A."/>
            <person name="Harkins R."/>
            <person name="Harris A."/>
            <person name="Strong C.M."/>
            <person name="Hou S."/>
            <person name="Tomlinson C."/>
            <person name="Dauphin-Kohlberg S."/>
            <person name="Kozlowicz-Reilly A."/>
            <person name="Leonard S."/>
            <person name="Rohlfing T."/>
            <person name="Rock S.M."/>
            <person name="Tin-Wollam A.-M."/>
            <person name="Abbott A."/>
            <person name="Minx P."/>
            <person name="Maupin R."/>
            <person name="Strowmatt C."/>
            <person name="Latreille P."/>
            <person name="Miller N."/>
            <person name="Johnson D."/>
            <person name="Murray J."/>
            <person name="Woessner J.P."/>
            <person name="Wendl M.C."/>
            <person name="Yang S.-P."/>
            <person name="Schultz B.R."/>
            <person name="Wallis J.W."/>
            <person name="Spieth J."/>
            <person name="Bieri T.A."/>
            <person name="Nelson J.O."/>
            <person name="Berkowicz N."/>
            <person name="Wohldmann P.E."/>
            <person name="Cook L.L."/>
            <person name="Hickenbotham M.T."/>
            <person name="Eldred J."/>
            <person name="Williams D."/>
            <person name="Bedell J.A."/>
            <person name="Mardis E.R."/>
            <person name="Clifton S.W."/>
            <person name="Chissoe S.L."/>
            <person name="Marra M.A."/>
            <person name="Raymond C."/>
            <person name="Haugen E."/>
            <person name="Gillett W."/>
            <person name="Zhou Y."/>
            <person name="James R."/>
            <person name="Phelps K."/>
            <person name="Iadanoto S."/>
            <person name="Bubb K."/>
            <person name="Simms E."/>
            <person name="Levy R."/>
            <person name="Clendenning J."/>
            <person name="Kaul R."/>
            <person name="Kent W.J."/>
            <person name="Furey T.S."/>
            <person name="Baertsch R.A."/>
            <person name="Brent M.R."/>
            <person name="Keibler E."/>
            <person name="Flicek P."/>
            <person name="Bork P."/>
            <person name="Suyama M."/>
            <person name="Bailey J.A."/>
            <person name="Portnoy M.E."/>
            <person name="Torrents D."/>
            <person name="Chinwalla A.T."/>
            <person name="Gish W.R."/>
            <person name="Eddy S.R."/>
            <person name="McPherson J.D."/>
            <person name="Olson M.V."/>
            <person name="Eichler E.E."/>
            <person name="Green E.D."/>
            <person name="Waterston R.H."/>
            <person name="Wilson R.K."/>
        </authorList>
    </citation>
    <scope>NUCLEOTIDE SEQUENCE [LARGE SCALE GENOMIC DNA]</scope>
</reference>
<name>ANR61_HUMAN</name>
<sequence>MGNITRKGSRDLVVDSAKSLEDGPSAALHSKLYEAIMREDCTTIEVLLRNHPVNQPITILPNSASNRLLLTQPTESIIPIHLAAKYHKAQSLLCLLRHGADPEVRDTTGLTTLNLMLLHWPVTSTTWAKPGNRTHRILTDIQNSSITCLRILCAHGAQVNTQGEISNKRSPLHLAIAYGCYPVLSILTQNGADVNAINEASMTPLHMAANMLNKEMMETLIAYGANVNCAVSSTGNTPLKLAVCTASSKAGRLLGAGVSCIRLLLTHGAKVNAQDYKGQTAIHEACFGGREAIINLLLEFEANVNILTRNGESPIYMYLQRSCNVRDTALLARLLYHTYPLRMTNNQGILPAGIMLPEFRLLRDTLIKQSQKPLSLQGICKRNIRNIYGEKYKQHLKQFLPVTIWNSVYCCYDLAYTS</sequence>
<keyword id="KW-0040">ANK repeat</keyword>
<keyword id="KW-1185">Reference proteome</keyword>
<keyword id="KW-0677">Repeat</keyword>
<gene>
    <name type="primary">ANKRD61</name>
</gene>
<feature type="chain" id="PRO_0000328762" description="Ankyrin repeat domain-containing protein 61">
    <location>
        <begin position="1"/>
        <end position="418"/>
    </location>
</feature>
<feature type="repeat" description="ANK 1">
    <location>
        <begin position="27"/>
        <end position="57"/>
    </location>
</feature>
<feature type="repeat" description="ANK 2">
    <location>
        <begin position="75"/>
        <end position="104"/>
    </location>
</feature>
<feature type="repeat" description="ANK 3">
    <location>
        <begin position="132"/>
        <end position="161"/>
    </location>
</feature>
<feature type="repeat" description="ANK 4">
    <location>
        <begin position="167"/>
        <end position="196"/>
    </location>
</feature>
<feature type="repeat" description="ANK 5">
    <location>
        <begin position="200"/>
        <end position="229"/>
    </location>
</feature>
<feature type="repeat" description="ANK 6">
    <location>
        <begin position="234"/>
        <end position="273"/>
    </location>
</feature>
<feature type="repeat" description="ANK 7">
    <location>
        <begin position="277"/>
        <end position="306"/>
    </location>
</feature>
<feature type="repeat" description="ANK 8">
    <location>
        <begin position="310"/>
        <end position="343"/>
    </location>
</feature>
<proteinExistence type="predicted"/>
<dbReference type="EMBL" id="AC005995">
    <property type="status" value="NOT_ANNOTATED_CDS"/>
    <property type="molecule type" value="Genomic_DNA"/>
</dbReference>
<dbReference type="CCDS" id="CCDS64590.1"/>
<dbReference type="RefSeq" id="NP_001258629.1">
    <property type="nucleotide sequence ID" value="NM_001271700.2"/>
</dbReference>
<dbReference type="SMR" id="A6NGH8"/>
<dbReference type="STRING" id="9606.ENSP00000386502"/>
<dbReference type="PhosphoSitePlus" id="A6NGH8"/>
<dbReference type="BioMuta" id="ANKRD61"/>
<dbReference type="PaxDb" id="9606-ENSP00000386502"/>
<dbReference type="ProteomicsDB" id="1128"/>
<dbReference type="Antibodypedia" id="49311">
    <property type="antibodies" value="54 antibodies from 11 providers"/>
</dbReference>
<dbReference type="DNASU" id="100310846"/>
<dbReference type="Ensembl" id="ENST00000409061.2">
    <property type="protein sequence ID" value="ENSP00000386502.1"/>
    <property type="gene ID" value="ENSG00000157999.6"/>
</dbReference>
<dbReference type="GeneID" id="100310846"/>
<dbReference type="KEGG" id="hsa:100310846"/>
<dbReference type="MANE-Select" id="ENST00000409061.2">
    <property type="protein sequence ID" value="ENSP00000386502.1"/>
    <property type="RefSeq nucleotide sequence ID" value="NM_001271700.2"/>
    <property type="RefSeq protein sequence ID" value="NP_001258629.1"/>
</dbReference>
<dbReference type="UCSC" id="uc031swn.2">
    <property type="organism name" value="human"/>
</dbReference>
<dbReference type="AGR" id="HGNC:22467"/>
<dbReference type="CTD" id="100310846"/>
<dbReference type="GeneCards" id="ANKRD61"/>
<dbReference type="HGNC" id="HGNC:22467">
    <property type="gene designation" value="ANKRD61"/>
</dbReference>
<dbReference type="HPA" id="ENSG00000157999">
    <property type="expression patterns" value="Group enriched (bone marrow, testis)"/>
</dbReference>
<dbReference type="neXtProt" id="NX_A6NGH8"/>
<dbReference type="OpenTargets" id="ENSG00000157999"/>
<dbReference type="VEuPathDB" id="HostDB:ENSG00000157999"/>
<dbReference type="eggNOG" id="KOG4177">
    <property type="taxonomic scope" value="Eukaryota"/>
</dbReference>
<dbReference type="GeneTree" id="ENSGT00840000130004"/>
<dbReference type="HOGENOM" id="CLU_054056_0_0_1"/>
<dbReference type="InParanoid" id="A6NGH8"/>
<dbReference type="OMA" id="AINESSM"/>
<dbReference type="OrthoDB" id="194358at2759"/>
<dbReference type="PAN-GO" id="A6NGH8">
    <property type="GO annotations" value="0 GO annotations based on evolutionary models"/>
</dbReference>
<dbReference type="PhylomeDB" id="A6NGH8"/>
<dbReference type="TreeFam" id="TF352214"/>
<dbReference type="PathwayCommons" id="A6NGH8"/>
<dbReference type="SignaLink" id="A6NGH8"/>
<dbReference type="BioGRID-ORCS" id="100310846">
    <property type="hits" value="8 hits in 1100 CRISPR screens"/>
</dbReference>
<dbReference type="GenomeRNAi" id="100310846"/>
<dbReference type="Pharos" id="A6NGH8">
    <property type="development level" value="Tdark"/>
</dbReference>
<dbReference type="PRO" id="PR:A6NGH8"/>
<dbReference type="Proteomes" id="UP000005640">
    <property type="component" value="Chromosome 7"/>
</dbReference>
<dbReference type="RNAct" id="A6NGH8">
    <property type="molecule type" value="protein"/>
</dbReference>
<dbReference type="Bgee" id="ENSG00000157999">
    <property type="expression patterns" value="Expressed in male germ line stem cell (sensu Vertebrata) in testis and 106 other cell types or tissues"/>
</dbReference>
<dbReference type="GO" id="GO:0005654">
    <property type="term" value="C:nucleoplasm"/>
    <property type="evidence" value="ECO:0000314"/>
    <property type="project" value="HPA"/>
</dbReference>
<dbReference type="Gene3D" id="1.25.40.20">
    <property type="entry name" value="Ankyrin repeat-containing domain"/>
    <property type="match status" value="3"/>
</dbReference>
<dbReference type="InterPro" id="IPR050663">
    <property type="entry name" value="Ankyrin-SOCS_Box"/>
</dbReference>
<dbReference type="InterPro" id="IPR002110">
    <property type="entry name" value="Ankyrin_rpt"/>
</dbReference>
<dbReference type="InterPro" id="IPR036770">
    <property type="entry name" value="Ankyrin_rpt-contain_sf"/>
</dbReference>
<dbReference type="PANTHER" id="PTHR24193:SF121">
    <property type="entry name" value="ADA2A-CONTAINING COMPLEX COMPONENT 3, ISOFORM D"/>
    <property type="match status" value="1"/>
</dbReference>
<dbReference type="PANTHER" id="PTHR24193">
    <property type="entry name" value="ANKYRIN REPEAT PROTEIN"/>
    <property type="match status" value="1"/>
</dbReference>
<dbReference type="Pfam" id="PF12796">
    <property type="entry name" value="Ank_2"/>
    <property type="match status" value="1"/>
</dbReference>
<dbReference type="Pfam" id="PF13637">
    <property type="entry name" value="Ank_4"/>
    <property type="match status" value="1"/>
</dbReference>
<dbReference type="PRINTS" id="PR01415">
    <property type="entry name" value="ANKYRIN"/>
</dbReference>
<dbReference type="SMART" id="SM00248">
    <property type="entry name" value="ANK"/>
    <property type="match status" value="5"/>
</dbReference>
<dbReference type="SUPFAM" id="SSF48403">
    <property type="entry name" value="Ankyrin repeat"/>
    <property type="match status" value="1"/>
</dbReference>
<dbReference type="PROSITE" id="PS50297">
    <property type="entry name" value="ANK_REP_REGION"/>
    <property type="match status" value="1"/>
</dbReference>
<dbReference type="PROSITE" id="PS50088">
    <property type="entry name" value="ANK_REPEAT"/>
    <property type="match status" value="5"/>
</dbReference>
<accession>A6NGH8</accession>
<protein>
    <recommendedName>
        <fullName>Ankyrin repeat domain-containing protein 61</fullName>
    </recommendedName>
</protein>